<evidence type="ECO:0000255" key="1">
    <source>
        <dbReference type="HAMAP-Rule" id="MF_01405"/>
    </source>
</evidence>
<accession>Q6A760</accession>
<comment type="function">
    <text evidence="1">Pyrophosphatase that catalyzes the hydrolysis of nucleoside triphosphates to their monophosphate derivatives, with a high preference for the non-canonical purine nucleotides XTP (xanthosine triphosphate), dITP (deoxyinosine triphosphate) and ITP. Seems to function as a house-cleaning enzyme that removes non-canonical purine nucleotides from the nucleotide pool, thus preventing their incorporation into DNA/RNA and avoiding chromosomal lesions.</text>
</comment>
<comment type="catalytic activity">
    <reaction evidence="1">
        <text>XTP + H2O = XMP + diphosphate + H(+)</text>
        <dbReference type="Rhea" id="RHEA:28610"/>
        <dbReference type="ChEBI" id="CHEBI:15377"/>
        <dbReference type="ChEBI" id="CHEBI:15378"/>
        <dbReference type="ChEBI" id="CHEBI:33019"/>
        <dbReference type="ChEBI" id="CHEBI:57464"/>
        <dbReference type="ChEBI" id="CHEBI:61314"/>
        <dbReference type="EC" id="3.6.1.66"/>
    </reaction>
</comment>
<comment type="catalytic activity">
    <reaction evidence="1">
        <text>dITP + H2O = dIMP + diphosphate + H(+)</text>
        <dbReference type="Rhea" id="RHEA:28342"/>
        <dbReference type="ChEBI" id="CHEBI:15377"/>
        <dbReference type="ChEBI" id="CHEBI:15378"/>
        <dbReference type="ChEBI" id="CHEBI:33019"/>
        <dbReference type="ChEBI" id="CHEBI:61194"/>
        <dbReference type="ChEBI" id="CHEBI:61382"/>
        <dbReference type="EC" id="3.6.1.66"/>
    </reaction>
</comment>
<comment type="catalytic activity">
    <reaction evidence="1">
        <text>ITP + H2O = IMP + diphosphate + H(+)</text>
        <dbReference type="Rhea" id="RHEA:29399"/>
        <dbReference type="ChEBI" id="CHEBI:15377"/>
        <dbReference type="ChEBI" id="CHEBI:15378"/>
        <dbReference type="ChEBI" id="CHEBI:33019"/>
        <dbReference type="ChEBI" id="CHEBI:58053"/>
        <dbReference type="ChEBI" id="CHEBI:61402"/>
        <dbReference type="EC" id="3.6.1.66"/>
    </reaction>
</comment>
<comment type="cofactor">
    <cofactor evidence="1">
        <name>Mg(2+)</name>
        <dbReference type="ChEBI" id="CHEBI:18420"/>
    </cofactor>
    <text evidence="1">Binds 1 Mg(2+) ion per subunit.</text>
</comment>
<comment type="subunit">
    <text evidence="1">Homodimer.</text>
</comment>
<comment type="similarity">
    <text evidence="1">Belongs to the HAM1 NTPase family.</text>
</comment>
<dbReference type="EC" id="3.6.1.66" evidence="1"/>
<dbReference type="EMBL" id="AE017283">
    <property type="protein sequence ID" value="AAT83405.1"/>
    <property type="molecule type" value="Genomic_DNA"/>
</dbReference>
<dbReference type="SMR" id="Q6A760"/>
<dbReference type="EnsemblBacteria" id="AAT83405">
    <property type="protein sequence ID" value="AAT83405"/>
    <property type="gene ID" value="PPA1673"/>
</dbReference>
<dbReference type="KEGG" id="pac:PPA1673"/>
<dbReference type="eggNOG" id="COG0127">
    <property type="taxonomic scope" value="Bacteria"/>
</dbReference>
<dbReference type="HOGENOM" id="CLU_082080_0_1_11"/>
<dbReference type="Proteomes" id="UP000000603">
    <property type="component" value="Chromosome"/>
</dbReference>
<dbReference type="GO" id="GO:0005829">
    <property type="term" value="C:cytosol"/>
    <property type="evidence" value="ECO:0007669"/>
    <property type="project" value="TreeGrafter"/>
</dbReference>
<dbReference type="GO" id="GO:0035870">
    <property type="term" value="F:dITP diphosphatase activity"/>
    <property type="evidence" value="ECO:0007669"/>
    <property type="project" value="RHEA"/>
</dbReference>
<dbReference type="GO" id="GO:0036220">
    <property type="term" value="F:ITP diphosphatase activity"/>
    <property type="evidence" value="ECO:0007669"/>
    <property type="project" value="UniProtKB-EC"/>
</dbReference>
<dbReference type="GO" id="GO:0046872">
    <property type="term" value="F:metal ion binding"/>
    <property type="evidence" value="ECO:0007669"/>
    <property type="project" value="UniProtKB-KW"/>
</dbReference>
<dbReference type="GO" id="GO:0000166">
    <property type="term" value="F:nucleotide binding"/>
    <property type="evidence" value="ECO:0007669"/>
    <property type="project" value="UniProtKB-KW"/>
</dbReference>
<dbReference type="GO" id="GO:0017111">
    <property type="term" value="F:ribonucleoside triphosphate phosphatase activity"/>
    <property type="evidence" value="ECO:0007669"/>
    <property type="project" value="InterPro"/>
</dbReference>
<dbReference type="GO" id="GO:0036222">
    <property type="term" value="F:XTP diphosphatase activity"/>
    <property type="evidence" value="ECO:0007669"/>
    <property type="project" value="RHEA"/>
</dbReference>
<dbReference type="GO" id="GO:0009117">
    <property type="term" value="P:nucleotide metabolic process"/>
    <property type="evidence" value="ECO:0007669"/>
    <property type="project" value="UniProtKB-KW"/>
</dbReference>
<dbReference type="GO" id="GO:0009146">
    <property type="term" value="P:purine nucleoside triphosphate catabolic process"/>
    <property type="evidence" value="ECO:0007669"/>
    <property type="project" value="UniProtKB-UniRule"/>
</dbReference>
<dbReference type="CDD" id="cd00515">
    <property type="entry name" value="HAM1"/>
    <property type="match status" value="1"/>
</dbReference>
<dbReference type="FunFam" id="3.90.950.10:FF:000001">
    <property type="entry name" value="dITP/XTP pyrophosphatase"/>
    <property type="match status" value="1"/>
</dbReference>
<dbReference type="Gene3D" id="3.90.950.10">
    <property type="match status" value="1"/>
</dbReference>
<dbReference type="HAMAP" id="MF_01405">
    <property type="entry name" value="Non_canon_purine_NTPase"/>
    <property type="match status" value="1"/>
</dbReference>
<dbReference type="InterPro" id="IPR020922">
    <property type="entry name" value="dITP/XTP_pyrophosphatase"/>
</dbReference>
<dbReference type="InterPro" id="IPR029001">
    <property type="entry name" value="ITPase-like_fam"/>
</dbReference>
<dbReference type="InterPro" id="IPR002637">
    <property type="entry name" value="RdgB/HAM1"/>
</dbReference>
<dbReference type="NCBIfam" id="TIGR00042">
    <property type="entry name" value="RdgB/HAM1 family non-canonical purine NTP pyrophosphatase"/>
    <property type="match status" value="1"/>
</dbReference>
<dbReference type="PANTHER" id="PTHR11067:SF9">
    <property type="entry name" value="INOSINE TRIPHOSPHATE PYROPHOSPHATASE"/>
    <property type="match status" value="1"/>
</dbReference>
<dbReference type="PANTHER" id="PTHR11067">
    <property type="entry name" value="INOSINE TRIPHOSPHATE PYROPHOSPHATASE/HAM1 PROTEIN"/>
    <property type="match status" value="1"/>
</dbReference>
<dbReference type="Pfam" id="PF01725">
    <property type="entry name" value="Ham1p_like"/>
    <property type="match status" value="1"/>
</dbReference>
<dbReference type="SUPFAM" id="SSF52972">
    <property type="entry name" value="ITPase-like"/>
    <property type="match status" value="1"/>
</dbReference>
<protein>
    <recommendedName>
        <fullName evidence="1">dITP/XTP pyrophosphatase</fullName>
        <ecNumber evidence="1">3.6.1.66</ecNumber>
    </recommendedName>
    <alternativeName>
        <fullName evidence="1">Non-canonical purine NTP pyrophosphatase</fullName>
    </alternativeName>
    <alternativeName>
        <fullName evidence="1">Non-standard purine NTP pyrophosphatase</fullName>
    </alternativeName>
    <alternativeName>
        <fullName evidence="1">Nucleoside-triphosphate diphosphatase</fullName>
    </alternativeName>
    <alternativeName>
        <fullName evidence="1">Nucleoside-triphosphate pyrophosphatase</fullName>
        <shortName evidence="1">NTPase</shortName>
    </alternativeName>
</protein>
<gene>
    <name type="ordered locus">PPA1673</name>
</gene>
<sequence length="204" mass="22107">MSRIVLASNNAKKLVELRRTFEGADTEVEIVGLSEVSDAPAPEETGRTFVENALIKARAAAHETGLPALADDSGLEVDALNRMPGIRSARWSGPHAHDERNLQLLLDQTFDLPDERRHGRFVCAMAFVDPDGTEITKVATMEGRIISEARGKNGFGYDPMFVPDAQPGDLTSAEMTPEVKDAISHRGQAVRAIVPAVVAHLEGR</sequence>
<organism>
    <name type="scientific">Cutibacterium acnes (strain DSM 16379 / KPA171202)</name>
    <name type="common">Propionibacterium acnes</name>
    <dbReference type="NCBI Taxonomy" id="267747"/>
    <lineage>
        <taxon>Bacteria</taxon>
        <taxon>Bacillati</taxon>
        <taxon>Actinomycetota</taxon>
        <taxon>Actinomycetes</taxon>
        <taxon>Propionibacteriales</taxon>
        <taxon>Propionibacteriaceae</taxon>
        <taxon>Cutibacterium</taxon>
    </lineage>
</organism>
<proteinExistence type="inferred from homology"/>
<name>IXTPA_CUTAK</name>
<reference key="1">
    <citation type="journal article" date="2004" name="Science">
        <title>The complete genome sequence of Propionibacterium acnes, a commensal of human skin.</title>
        <authorList>
            <person name="Brueggemann H."/>
            <person name="Henne A."/>
            <person name="Hoster F."/>
            <person name="Liesegang H."/>
            <person name="Wiezer A."/>
            <person name="Strittmatter A."/>
            <person name="Hujer S."/>
            <person name="Duerre P."/>
            <person name="Gottschalk G."/>
        </authorList>
    </citation>
    <scope>NUCLEOTIDE SEQUENCE [LARGE SCALE GENOMIC DNA]</scope>
    <source>
        <strain>DSM 16379 / KPA171202</strain>
    </source>
</reference>
<feature type="chain" id="PRO_0000178209" description="dITP/XTP pyrophosphatase">
    <location>
        <begin position="1"/>
        <end position="204"/>
    </location>
</feature>
<feature type="active site" description="Proton acceptor" evidence="1">
    <location>
        <position position="72"/>
    </location>
</feature>
<feature type="binding site" evidence="1">
    <location>
        <begin position="8"/>
        <end position="13"/>
    </location>
    <ligand>
        <name>substrate</name>
    </ligand>
</feature>
<feature type="binding site" evidence="1">
    <location>
        <position position="43"/>
    </location>
    <ligand>
        <name>Mg(2+)</name>
        <dbReference type="ChEBI" id="CHEBI:18420"/>
    </ligand>
</feature>
<feature type="binding site" evidence="1">
    <location>
        <position position="72"/>
    </location>
    <ligand>
        <name>Mg(2+)</name>
        <dbReference type="ChEBI" id="CHEBI:18420"/>
    </ligand>
</feature>
<feature type="binding site" evidence="1">
    <location>
        <position position="73"/>
    </location>
    <ligand>
        <name>substrate</name>
    </ligand>
</feature>
<feature type="binding site" evidence="1">
    <location>
        <begin position="155"/>
        <end position="158"/>
    </location>
    <ligand>
        <name>substrate</name>
    </ligand>
</feature>
<feature type="binding site" evidence="1">
    <location>
        <position position="180"/>
    </location>
    <ligand>
        <name>substrate</name>
    </ligand>
</feature>
<feature type="binding site" evidence="1">
    <location>
        <begin position="185"/>
        <end position="186"/>
    </location>
    <ligand>
        <name>substrate</name>
    </ligand>
</feature>
<keyword id="KW-0378">Hydrolase</keyword>
<keyword id="KW-0460">Magnesium</keyword>
<keyword id="KW-0479">Metal-binding</keyword>
<keyword id="KW-0546">Nucleotide metabolism</keyword>
<keyword id="KW-0547">Nucleotide-binding</keyword>